<dbReference type="PIR" id="S00539">
    <property type="entry name" value="HBGRR"/>
</dbReference>
<dbReference type="SMR" id="P68063"/>
<dbReference type="GO" id="GO:0072562">
    <property type="term" value="C:blood microparticle"/>
    <property type="evidence" value="ECO:0007669"/>
    <property type="project" value="TreeGrafter"/>
</dbReference>
<dbReference type="GO" id="GO:0031838">
    <property type="term" value="C:haptoglobin-hemoglobin complex"/>
    <property type="evidence" value="ECO:0007669"/>
    <property type="project" value="TreeGrafter"/>
</dbReference>
<dbReference type="GO" id="GO:0005833">
    <property type="term" value="C:hemoglobin complex"/>
    <property type="evidence" value="ECO:0007669"/>
    <property type="project" value="InterPro"/>
</dbReference>
<dbReference type="GO" id="GO:0031720">
    <property type="term" value="F:haptoglobin binding"/>
    <property type="evidence" value="ECO:0007669"/>
    <property type="project" value="TreeGrafter"/>
</dbReference>
<dbReference type="GO" id="GO:0020037">
    <property type="term" value="F:heme binding"/>
    <property type="evidence" value="ECO:0007669"/>
    <property type="project" value="InterPro"/>
</dbReference>
<dbReference type="GO" id="GO:0046872">
    <property type="term" value="F:metal ion binding"/>
    <property type="evidence" value="ECO:0007669"/>
    <property type="project" value="UniProtKB-KW"/>
</dbReference>
<dbReference type="GO" id="GO:0043177">
    <property type="term" value="F:organic acid binding"/>
    <property type="evidence" value="ECO:0007669"/>
    <property type="project" value="TreeGrafter"/>
</dbReference>
<dbReference type="GO" id="GO:0019825">
    <property type="term" value="F:oxygen binding"/>
    <property type="evidence" value="ECO:0007669"/>
    <property type="project" value="InterPro"/>
</dbReference>
<dbReference type="GO" id="GO:0005344">
    <property type="term" value="F:oxygen carrier activity"/>
    <property type="evidence" value="ECO:0007669"/>
    <property type="project" value="UniProtKB-KW"/>
</dbReference>
<dbReference type="GO" id="GO:0004601">
    <property type="term" value="F:peroxidase activity"/>
    <property type="evidence" value="ECO:0007669"/>
    <property type="project" value="TreeGrafter"/>
</dbReference>
<dbReference type="GO" id="GO:0042744">
    <property type="term" value="P:hydrogen peroxide catabolic process"/>
    <property type="evidence" value="ECO:0007669"/>
    <property type="project" value="TreeGrafter"/>
</dbReference>
<dbReference type="CDD" id="cd08925">
    <property type="entry name" value="Hb-beta-like"/>
    <property type="match status" value="1"/>
</dbReference>
<dbReference type="FunFam" id="1.10.490.10:FF:000001">
    <property type="entry name" value="Hemoglobin subunit beta"/>
    <property type="match status" value="1"/>
</dbReference>
<dbReference type="Gene3D" id="1.10.490.10">
    <property type="entry name" value="Globins"/>
    <property type="match status" value="1"/>
</dbReference>
<dbReference type="InterPro" id="IPR000971">
    <property type="entry name" value="Globin"/>
</dbReference>
<dbReference type="InterPro" id="IPR009050">
    <property type="entry name" value="Globin-like_sf"/>
</dbReference>
<dbReference type="InterPro" id="IPR012292">
    <property type="entry name" value="Globin/Proto"/>
</dbReference>
<dbReference type="InterPro" id="IPR002337">
    <property type="entry name" value="Hemoglobin_b"/>
</dbReference>
<dbReference type="InterPro" id="IPR050056">
    <property type="entry name" value="Hemoglobin_oxygen_transport"/>
</dbReference>
<dbReference type="PANTHER" id="PTHR11442">
    <property type="entry name" value="HEMOGLOBIN FAMILY MEMBER"/>
    <property type="match status" value="1"/>
</dbReference>
<dbReference type="PANTHER" id="PTHR11442:SF7">
    <property type="entry name" value="HEMOGLOBIN SUBUNIT EPSILON"/>
    <property type="match status" value="1"/>
</dbReference>
<dbReference type="Pfam" id="PF00042">
    <property type="entry name" value="Globin"/>
    <property type="match status" value="1"/>
</dbReference>
<dbReference type="PRINTS" id="PR00814">
    <property type="entry name" value="BETAHAEM"/>
</dbReference>
<dbReference type="SUPFAM" id="SSF46458">
    <property type="entry name" value="Globin-like"/>
    <property type="match status" value="1"/>
</dbReference>
<dbReference type="PROSITE" id="PS01033">
    <property type="entry name" value="GLOBIN"/>
    <property type="match status" value="1"/>
</dbReference>
<organism>
    <name type="scientific">Gyps rueppelli</name>
    <name type="common">Rueppell's griffon</name>
    <name type="synonym">Vultur rueppellii</name>
    <dbReference type="NCBI Taxonomy" id="8967"/>
    <lineage>
        <taxon>Eukaryota</taxon>
        <taxon>Metazoa</taxon>
        <taxon>Chordata</taxon>
        <taxon>Craniata</taxon>
        <taxon>Vertebrata</taxon>
        <taxon>Euteleostomi</taxon>
        <taxon>Archelosauria</taxon>
        <taxon>Archosauria</taxon>
        <taxon>Dinosauria</taxon>
        <taxon>Saurischia</taxon>
        <taxon>Theropoda</taxon>
        <taxon>Coelurosauria</taxon>
        <taxon>Aves</taxon>
        <taxon>Neognathae</taxon>
        <taxon>Neoaves</taxon>
        <taxon>Telluraves</taxon>
        <taxon>Accipitrimorphae</taxon>
        <taxon>Accipitriformes</taxon>
        <taxon>Accipitridae</taxon>
        <taxon>Accipitrinae</taxon>
        <taxon>Gyps</taxon>
    </lineage>
</organism>
<protein>
    <recommendedName>
        <fullName>Hemoglobin subunit beta</fullName>
    </recommendedName>
    <alternativeName>
        <fullName>Beta-globin</fullName>
    </alternativeName>
    <alternativeName>
        <fullName>Hemoglobin beta chain</fullName>
    </alternativeName>
</protein>
<reference key="1">
    <citation type="journal article" date="1988" name="Biol. Chem. Hoppe-Seyler">
        <title>High-altitude respiration of birds. Structural adaptations in the major and minor hemoglobin components of adult Ruppell's Griffon (Gyps rueppellii, Aegypiinae): a new molecular pattern for hypoxic tolerance.</title>
        <authorList>
            <person name="Hiebl I."/>
            <person name="Weber R.E."/>
            <person name="Schneeganss D."/>
            <person name="Kosters J."/>
            <person name="Braunitzer G."/>
        </authorList>
    </citation>
    <scope>PROTEIN SEQUENCE</scope>
</reference>
<accession>P68063</accession>
<accession>P07418</accession>
<name>HBB_GYPRU</name>
<gene>
    <name type="primary">HBB</name>
</gene>
<feature type="chain" id="PRO_0000052970" description="Hemoglobin subunit beta">
    <location>
        <begin position="1"/>
        <end position="146"/>
    </location>
</feature>
<feature type="domain" description="Globin" evidence="1">
    <location>
        <begin position="2"/>
        <end position="146"/>
    </location>
</feature>
<feature type="binding site" description="distal binding residue">
    <location>
        <position position="63"/>
    </location>
    <ligand>
        <name>heme b</name>
        <dbReference type="ChEBI" id="CHEBI:60344"/>
    </ligand>
    <ligandPart>
        <name>Fe</name>
        <dbReference type="ChEBI" id="CHEBI:18248"/>
    </ligandPart>
</feature>
<feature type="binding site" description="proximal binding residue">
    <location>
        <position position="92"/>
    </location>
    <ligand>
        <name>heme b</name>
        <dbReference type="ChEBI" id="CHEBI:60344"/>
    </ligand>
    <ligandPart>
        <name>Fe</name>
        <dbReference type="ChEBI" id="CHEBI:18248"/>
    </ligandPart>
</feature>
<sequence>VHWTAEEKQLITGLWGKVNVADCGAEALARLLIVYPWTQRFFASFGNLSSPTAIIGNPMVRAHGKKVLTSFGEAVKNLDNIKNTFAQLSELHCDKLHVDPENFRLLGDILIIVLAAHFGKDFSPDCQAAWQKLVRAVAHALARKYH</sequence>
<proteinExistence type="evidence at protein level"/>
<keyword id="KW-0903">Direct protein sequencing</keyword>
<keyword id="KW-0349">Heme</keyword>
<keyword id="KW-0408">Iron</keyword>
<keyword id="KW-0479">Metal-binding</keyword>
<keyword id="KW-0561">Oxygen transport</keyword>
<keyword id="KW-0813">Transport</keyword>
<comment type="function">
    <text>Involved in oxygen transport from the lung to the various peripheral tissues.</text>
</comment>
<comment type="subunit">
    <text>Heterotetramer of two alpha chains and two beta chains.</text>
</comment>
<comment type="tissue specificity">
    <text>Red blood cells.</text>
</comment>
<comment type="similarity">
    <text evidence="1">Belongs to the globin family.</text>
</comment>
<evidence type="ECO:0000255" key="1">
    <source>
        <dbReference type="PROSITE-ProRule" id="PRU00238"/>
    </source>
</evidence>